<accession>P57118</accession>
<name>ATP6_BUCAI</name>
<organism>
    <name type="scientific">Buchnera aphidicola subsp. Acyrthosiphon pisum (strain APS)</name>
    <name type="common">Acyrthosiphon pisum symbiotic bacterium</name>
    <dbReference type="NCBI Taxonomy" id="107806"/>
    <lineage>
        <taxon>Bacteria</taxon>
        <taxon>Pseudomonadati</taxon>
        <taxon>Pseudomonadota</taxon>
        <taxon>Gammaproteobacteria</taxon>
        <taxon>Enterobacterales</taxon>
        <taxon>Erwiniaceae</taxon>
        <taxon>Buchnera</taxon>
    </lineage>
</organism>
<reference key="1">
    <citation type="journal article" date="2000" name="Nature">
        <title>Genome sequence of the endocellular bacterial symbiont of aphids Buchnera sp. APS.</title>
        <authorList>
            <person name="Shigenobu S."/>
            <person name="Watanabe H."/>
            <person name="Hattori M."/>
            <person name="Sakaki Y."/>
            <person name="Ishikawa H."/>
        </authorList>
    </citation>
    <scope>NUCLEOTIDE SEQUENCE [LARGE SCALE GENOMIC DNA]</scope>
    <source>
        <strain>APS</strain>
    </source>
</reference>
<evidence type="ECO:0000255" key="1">
    <source>
        <dbReference type="HAMAP-Rule" id="MF_01393"/>
    </source>
</evidence>
<gene>
    <name evidence="1" type="primary">atpB</name>
    <name type="ordered locus">BU002</name>
</gene>
<protein>
    <recommendedName>
        <fullName evidence="1">ATP synthase subunit a</fullName>
    </recommendedName>
    <alternativeName>
        <fullName evidence="1">ATP synthase F0 sector subunit a</fullName>
    </alternativeName>
    <alternativeName>
        <fullName evidence="1">F-ATPase subunit 6</fullName>
    </alternativeName>
</protein>
<dbReference type="EMBL" id="BA000003">
    <property type="protein sequence ID" value="BAB12730.1"/>
    <property type="molecule type" value="Genomic_DNA"/>
</dbReference>
<dbReference type="RefSeq" id="NP_239844.1">
    <property type="nucleotide sequence ID" value="NC_002528.1"/>
</dbReference>
<dbReference type="RefSeq" id="WP_010895897.1">
    <property type="nucleotide sequence ID" value="NC_002528.1"/>
</dbReference>
<dbReference type="SMR" id="P57118"/>
<dbReference type="STRING" id="563178.BUAP5A_002"/>
<dbReference type="EnsemblBacteria" id="BAB12730">
    <property type="protein sequence ID" value="BAB12730"/>
    <property type="gene ID" value="BAB12730"/>
</dbReference>
<dbReference type="KEGG" id="buc:BU002"/>
<dbReference type="PATRIC" id="fig|107806.10.peg.15"/>
<dbReference type="eggNOG" id="COG0356">
    <property type="taxonomic scope" value="Bacteria"/>
</dbReference>
<dbReference type="HOGENOM" id="CLU_041018_1_0_6"/>
<dbReference type="Proteomes" id="UP000001806">
    <property type="component" value="Chromosome"/>
</dbReference>
<dbReference type="GO" id="GO:0005886">
    <property type="term" value="C:plasma membrane"/>
    <property type="evidence" value="ECO:0007669"/>
    <property type="project" value="UniProtKB-SubCell"/>
</dbReference>
<dbReference type="GO" id="GO:0045259">
    <property type="term" value="C:proton-transporting ATP synthase complex"/>
    <property type="evidence" value="ECO:0007669"/>
    <property type="project" value="UniProtKB-KW"/>
</dbReference>
<dbReference type="GO" id="GO:0046933">
    <property type="term" value="F:proton-transporting ATP synthase activity, rotational mechanism"/>
    <property type="evidence" value="ECO:0007669"/>
    <property type="project" value="UniProtKB-UniRule"/>
</dbReference>
<dbReference type="GO" id="GO:0042777">
    <property type="term" value="P:proton motive force-driven plasma membrane ATP synthesis"/>
    <property type="evidence" value="ECO:0007669"/>
    <property type="project" value="TreeGrafter"/>
</dbReference>
<dbReference type="CDD" id="cd00310">
    <property type="entry name" value="ATP-synt_Fo_a_6"/>
    <property type="match status" value="1"/>
</dbReference>
<dbReference type="FunFam" id="1.20.120.220:FF:000002">
    <property type="entry name" value="ATP synthase subunit a"/>
    <property type="match status" value="1"/>
</dbReference>
<dbReference type="Gene3D" id="1.20.120.220">
    <property type="entry name" value="ATP synthase, F0 complex, subunit A"/>
    <property type="match status" value="1"/>
</dbReference>
<dbReference type="HAMAP" id="MF_01393">
    <property type="entry name" value="ATP_synth_a_bact"/>
    <property type="match status" value="1"/>
</dbReference>
<dbReference type="InterPro" id="IPR045082">
    <property type="entry name" value="ATP_syn_F0_a_bact/chloroplast"/>
</dbReference>
<dbReference type="InterPro" id="IPR000568">
    <property type="entry name" value="ATP_synth_F0_asu"/>
</dbReference>
<dbReference type="InterPro" id="IPR023011">
    <property type="entry name" value="ATP_synth_F0_asu_AS"/>
</dbReference>
<dbReference type="InterPro" id="IPR035908">
    <property type="entry name" value="F0_ATP_A_sf"/>
</dbReference>
<dbReference type="NCBIfam" id="TIGR01131">
    <property type="entry name" value="ATP_synt_6_or_A"/>
    <property type="match status" value="1"/>
</dbReference>
<dbReference type="NCBIfam" id="NF004477">
    <property type="entry name" value="PRK05815.1-1"/>
    <property type="match status" value="1"/>
</dbReference>
<dbReference type="PANTHER" id="PTHR42823">
    <property type="entry name" value="ATP SYNTHASE SUBUNIT A, CHLOROPLASTIC"/>
    <property type="match status" value="1"/>
</dbReference>
<dbReference type="PANTHER" id="PTHR42823:SF3">
    <property type="entry name" value="ATP SYNTHASE SUBUNIT A, CHLOROPLASTIC"/>
    <property type="match status" value="1"/>
</dbReference>
<dbReference type="Pfam" id="PF00119">
    <property type="entry name" value="ATP-synt_A"/>
    <property type="match status" value="1"/>
</dbReference>
<dbReference type="PRINTS" id="PR00123">
    <property type="entry name" value="ATPASEA"/>
</dbReference>
<dbReference type="SUPFAM" id="SSF81336">
    <property type="entry name" value="F1F0 ATP synthase subunit A"/>
    <property type="match status" value="1"/>
</dbReference>
<dbReference type="PROSITE" id="PS00449">
    <property type="entry name" value="ATPASE_A"/>
    <property type="match status" value="1"/>
</dbReference>
<keyword id="KW-0066">ATP synthesis</keyword>
<keyword id="KW-1003">Cell membrane</keyword>
<keyword id="KW-0138">CF(0)</keyword>
<keyword id="KW-0375">Hydrogen ion transport</keyword>
<keyword id="KW-0406">Ion transport</keyword>
<keyword id="KW-0472">Membrane</keyword>
<keyword id="KW-1185">Reference proteome</keyword>
<keyword id="KW-0812">Transmembrane</keyword>
<keyword id="KW-1133">Transmembrane helix</keyword>
<keyword id="KW-0813">Transport</keyword>
<comment type="function">
    <text evidence="1">Key component of the proton channel; it plays a direct role in the translocation of protons across the membrane.</text>
</comment>
<comment type="subunit">
    <text evidence="1">F-type ATPases have 2 components, CF(1) - the catalytic core - and CF(0) - the membrane proton channel. CF(1) has five subunits: alpha(3), beta(3), gamma(1), delta(1), epsilon(1). CF(0) has three main subunits: a(1), b(2) and c(9-12). The alpha and beta chains form an alternating ring which encloses part of the gamma chain. CF(1) is attached to CF(0) by a central stalk formed by the gamma and epsilon chains, while a peripheral stalk is formed by the delta and b chains.</text>
</comment>
<comment type="subcellular location">
    <subcellularLocation>
        <location evidence="1">Cell membrane</location>
        <topology evidence="1">Multi-pass membrane protein</topology>
    </subcellularLocation>
</comment>
<comment type="similarity">
    <text evidence="1">Belongs to the ATPase A chain family.</text>
</comment>
<proteinExistence type="inferred from homology"/>
<sequence>MILEKISDPQKYISHHLSHLQIDLRSFKIIQPGALSSDYWTVNVDSMFFSLVLGSFFLSIFYMVGKKITQGIPGKLQTAIELIFEFVNLNVKSMYQGKNALIAPLSLTVFIWVFLMNLMDLVPIDFFPFISEKVFELPAMRIVPSADINITLSMSLGVFFLILFYTVKIKGYVGFLKELILQPFNHPVFSIFNFILEFVSLVSKPISLGLRLFGNMYAGEMIFILIAGLLPWWTQCFLNVPWAIFHILIISLQAFIFMVLTIVYLSMASQSHKD</sequence>
<feature type="chain" id="PRO_0000082049" description="ATP synthase subunit a">
    <location>
        <begin position="1"/>
        <end position="274"/>
    </location>
</feature>
<feature type="transmembrane region" description="Helical" evidence="1">
    <location>
        <begin position="44"/>
        <end position="64"/>
    </location>
</feature>
<feature type="transmembrane region" description="Helical" evidence="1">
    <location>
        <begin position="110"/>
        <end position="130"/>
    </location>
</feature>
<feature type="transmembrane region" description="Helical" evidence="1">
    <location>
        <begin position="142"/>
        <end position="164"/>
    </location>
</feature>
<feature type="transmembrane region" description="Helical" evidence="1">
    <location>
        <begin position="212"/>
        <end position="232"/>
    </location>
</feature>
<feature type="transmembrane region" description="Helical" evidence="1">
    <location>
        <begin position="243"/>
        <end position="263"/>
    </location>
</feature>